<name>C3H6_ARATH</name>
<keyword id="KW-0238">DNA-binding</keyword>
<keyword id="KW-0479">Metal-binding</keyword>
<keyword id="KW-1185">Reference proteome</keyword>
<keyword id="KW-0862">Zinc</keyword>
<keyword id="KW-0863">Zinc-finger</keyword>
<gene>
    <name type="ordered locus">At1g19860</name>
    <name type="ORF">F6F9.9</name>
</gene>
<evidence type="ECO:0000255" key="1">
    <source>
        <dbReference type="PROSITE-ProRule" id="PRU00723"/>
    </source>
</evidence>
<evidence type="ECO:0000256" key="2">
    <source>
        <dbReference type="SAM" id="MobiDB-lite"/>
    </source>
</evidence>
<evidence type="ECO:0000305" key="3"/>
<comment type="interaction">
    <interactant intactId="EBI-15197415">
        <id>Q56XU4</id>
    </interactant>
    <interactant intactId="EBI-4424877">
        <id>Q9S7W5</id>
        <label>TCP13</label>
    </interactant>
    <organismsDiffer>false</organismsDiffer>
    <experiments>3</experiments>
</comment>
<comment type="interaction">
    <interactant intactId="EBI-15197415">
        <id>Q56XU4</id>
    </interactant>
    <interactant intactId="EBI-9838721">
        <id>O64647</id>
        <label>TCP9</label>
    </interactant>
    <organismsDiffer>false</organismsDiffer>
    <experiments>3</experiments>
</comment>
<comment type="sequence caution" evidence="3">
    <conflict type="erroneous gene model prediction">
        <sequence resource="EMBL-CDS" id="AAG12545"/>
    </conflict>
</comment>
<dbReference type="EMBL" id="AC007797">
    <property type="protein sequence ID" value="AAG12545.1"/>
    <property type="status" value="ALT_SEQ"/>
    <property type="molecule type" value="Genomic_DNA"/>
</dbReference>
<dbReference type="EMBL" id="CP002684">
    <property type="protein sequence ID" value="AEE29907.1"/>
    <property type="molecule type" value="Genomic_DNA"/>
</dbReference>
<dbReference type="EMBL" id="AK221579">
    <property type="protein sequence ID" value="BAD95060.1"/>
    <property type="molecule type" value="mRNA"/>
</dbReference>
<dbReference type="EMBL" id="BT025557">
    <property type="protein sequence ID" value="ABF58975.1"/>
    <property type="molecule type" value="mRNA"/>
</dbReference>
<dbReference type="PIR" id="H86331">
    <property type="entry name" value="H86331"/>
</dbReference>
<dbReference type="RefSeq" id="NP_564096.1">
    <property type="nucleotide sequence ID" value="NM_101841.5"/>
</dbReference>
<dbReference type="SMR" id="Q56XU4"/>
<dbReference type="BioGRID" id="23813">
    <property type="interactions" value="41"/>
</dbReference>
<dbReference type="FunCoup" id="Q56XU4">
    <property type="interactions" value="1553"/>
</dbReference>
<dbReference type="IntAct" id="Q56XU4">
    <property type="interactions" value="39"/>
</dbReference>
<dbReference type="STRING" id="3702.Q56XU4"/>
<dbReference type="PaxDb" id="3702-AT1G19860.1"/>
<dbReference type="ProteomicsDB" id="240561"/>
<dbReference type="EnsemblPlants" id="AT1G19860.1">
    <property type="protein sequence ID" value="AT1G19860.1"/>
    <property type="gene ID" value="AT1G19860"/>
</dbReference>
<dbReference type="GeneID" id="838574"/>
<dbReference type="Gramene" id="AT1G19860.1">
    <property type="protein sequence ID" value="AT1G19860.1"/>
    <property type="gene ID" value="AT1G19860"/>
</dbReference>
<dbReference type="KEGG" id="ath:AT1G19860"/>
<dbReference type="Araport" id="AT1G19860"/>
<dbReference type="TAIR" id="AT1G19860"/>
<dbReference type="eggNOG" id="ENOG502QQT9">
    <property type="taxonomic scope" value="Eukaryota"/>
</dbReference>
<dbReference type="HOGENOM" id="CLU_023896_0_0_1"/>
<dbReference type="InParanoid" id="Q56XU4"/>
<dbReference type="OMA" id="YQHDASF"/>
<dbReference type="OrthoDB" id="1928519at2759"/>
<dbReference type="PhylomeDB" id="Q56XU4"/>
<dbReference type="PRO" id="PR:Q56XU4"/>
<dbReference type="Proteomes" id="UP000006548">
    <property type="component" value="Chromosome 1"/>
</dbReference>
<dbReference type="ExpressionAtlas" id="Q56XU4">
    <property type="expression patterns" value="baseline and differential"/>
</dbReference>
<dbReference type="GO" id="GO:0003677">
    <property type="term" value="F:DNA binding"/>
    <property type="evidence" value="ECO:0007669"/>
    <property type="project" value="UniProtKB-KW"/>
</dbReference>
<dbReference type="GO" id="GO:0008270">
    <property type="term" value="F:zinc ion binding"/>
    <property type="evidence" value="ECO:0007669"/>
    <property type="project" value="UniProtKB-KW"/>
</dbReference>
<dbReference type="InterPro" id="IPR000571">
    <property type="entry name" value="Znf_CCCH"/>
</dbReference>
<dbReference type="PANTHER" id="PTHR33400:SF2">
    <property type="entry name" value="ZINC FINGER CCCH DOMAIN-CONTAINING PROTEIN 6"/>
    <property type="match status" value="1"/>
</dbReference>
<dbReference type="PANTHER" id="PTHR33400">
    <property type="entry name" value="ZINC FINGER CCCH DOMAIN-CONTAINING PROTEIN 6-RELATED"/>
    <property type="match status" value="1"/>
</dbReference>
<dbReference type="PROSITE" id="PS50103">
    <property type="entry name" value="ZF_C3H1"/>
    <property type="match status" value="1"/>
</dbReference>
<proteinExistence type="evidence at protein level"/>
<feature type="chain" id="PRO_0000371967" description="Zinc finger CCCH domain-containing protein 6">
    <location>
        <begin position="1"/>
        <end position="413"/>
    </location>
</feature>
<feature type="zinc finger region" description="C3H1-type" evidence="1">
    <location>
        <begin position="357"/>
        <end position="385"/>
    </location>
</feature>
<feature type="region of interest" description="Disordered" evidence="2">
    <location>
        <begin position="28"/>
        <end position="61"/>
    </location>
</feature>
<feature type="region of interest" description="Disordered" evidence="2">
    <location>
        <begin position="159"/>
        <end position="191"/>
    </location>
</feature>
<feature type="region of interest" description="Disordered" evidence="2">
    <location>
        <begin position="333"/>
        <end position="356"/>
    </location>
</feature>
<feature type="region of interest" description="Disordered" evidence="2">
    <location>
        <begin position="389"/>
        <end position="413"/>
    </location>
</feature>
<feature type="compositionally biased region" description="Polar residues" evidence="2">
    <location>
        <begin position="176"/>
        <end position="189"/>
    </location>
</feature>
<feature type="compositionally biased region" description="Polar residues" evidence="2">
    <location>
        <begin position="389"/>
        <end position="403"/>
    </location>
</feature>
<reference key="1">
    <citation type="journal article" date="2000" name="Nature">
        <title>Sequence and analysis of chromosome 1 of the plant Arabidopsis thaliana.</title>
        <authorList>
            <person name="Theologis A."/>
            <person name="Ecker J.R."/>
            <person name="Palm C.J."/>
            <person name="Federspiel N.A."/>
            <person name="Kaul S."/>
            <person name="White O."/>
            <person name="Alonso J."/>
            <person name="Altafi H."/>
            <person name="Araujo R."/>
            <person name="Bowman C.L."/>
            <person name="Brooks S.Y."/>
            <person name="Buehler E."/>
            <person name="Chan A."/>
            <person name="Chao Q."/>
            <person name="Chen H."/>
            <person name="Cheuk R.F."/>
            <person name="Chin C.W."/>
            <person name="Chung M.K."/>
            <person name="Conn L."/>
            <person name="Conway A.B."/>
            <person name="Conway A.R."/>
            <person name="Creasy T.H."/>
            <person name="Dewar K."/>
            <person name="Dunn P."/>
            <person name="Etgu P."/>
            <person name="Feldblyum T.V."/>
            <person name="Feng J.-D."/>
            <person name="Fong B."/>
            <person name="Fujii C.Y."/>
            <person name="Gill J.E."/>
            <person name="Goldsmith A.D."/>
            <person name="Haas B."/>
            <person name="Hansen N.F."/>
            <person name="Hughes B."/>
            <person name="Huizar L."/>
            <person name="Hunter J.L."/>
            <person name="Jenkins J."/>
            <person name="Johnson-Hopson C."/>
            <person name="Khan S."/>
            <person name="Khaykin E."/>
            <person name="Kim C.J."/>
            <person name="Koo H.L."/>
            <person name="Kremenetskaia I."/>
            <person name="Kurtz D.B."/>
            <person name="Kwan A."/>
            <person name="Lam B."/>
            <person name="Langin-Hooper S."/>
            <person name="Lee A."/>
            <person name="Lee J.M."/>
            <person name="Lenz C.A."/>
            <person name="Li J.H."/>
            <person name="Li Y.-P."/>
            <person name="Lin X."/>
            <person name="Liu S.X."/>
            <person name="Liu Z.A."/>
            <person name="Luros J.S."/>
            <person name="Maiti R."/>
            <person name="Marziali A."/>
            <person name="Militscher J."/>
            <person name="Miranda M."/>
            <person name="Nguyen M."/>
            <person name="Nierman W.C."/>
            <person name="Osborne B.I."/>
            <person name="Pai G."/>
            <person name="Peterson J."/>
            <person name="Pham P.K."/>
            <person name="Rizzo M."/>
            <person name="Rooney T."/>
            <person name="Rowley D."/>
            <person name="Sakano H."/>
            <person name="Salzberg S.L."/>
            <person name="Schwartz J.R."/>
            <person name="Shinn P."/>
            <person name="Southwick A.M."/>
            <person name="Sun H."/>
            <person name="Tallon L.J."/>
            <person name="Tambunga G."/>
            <person name="Toriumi M.J."/>
            <person name="Town C.D."/>
            <person name="Utterback T."/>
            <person name="Van Aken S."/>
            <person name="Vaysberg M."/>
            <person name="Vysotskaia V.S."/>
            <person name="Walker M."/>
            <person name="Wu D."/>
            <person name="Yu G."/>
            <person name="Fraser C.M."/>
            <person name="Venter J.C."/>
            <person name="Davis R.W."/>
        </authorList>
    </citation>
    <scope>NUCLEOTIDE SEQUENCE [LARGE SCALE GENOMIC DNA]</scope>
    <source>
        <strain>cv. Columbia</strain>
    </source>
</reference>
<reference key="2">
    <citation type="journal article" date="2017" name="Plant J.">
        <title>Araport11: a complete reannotation of the Arabidopsis thaliana reference genome.</title>
        <authorList>
            <person name="Cheng C.Y."/>
            <person name="Krishnakumar V."/>
            <person name="Chan A.P."/>
            <person name="Thibaud-Nissen F."/>
            <person name="Schobel S."/>
            <person name="Town C.D."/>
        </authorList>
    </citation>
    <scope>GENOME REANNOTATION</scope>
    <source>
        <strain>cv. Columbia</strain>
    </source>
</reference>
<reference key="3">
    <citation type="submission" date="2005-03" db="EMBL/GenBank/DDBJ databases">
        <title>Large-scale analysis of RIKEN Arabidopsis full-length (RAFL) cDNAs.</title>
        <authorList>
            <person name="Totoki Y."/>
            <person name="Seki M."/>
            <person name="Ishida J."/>
            <person name="Nakajima M."/>
            <person name="Enju A."/>
            <person name="Kamiya A."/>
            <person name="Narusaka M."/>
            <person name="Shin-i T."/>
            <person name="Nakagawa M."/>
            <person name="Sakamoto N."/>
            <person name="Oishi K."/>
            <person name="Kohara Y."/>
            <person name="Kobayashi M."/>
            <person name="Toyoda A."/>
            <person name="Sakaki Y."/>
            <person name="Sakurai T."/>
            <person name="Iida K."/>
            <person name="Akiyama K."/>
            <person name="Satou M."/>
            <person name="Toyoda T."/>
            <person name="Konagaya A."/>
            <person name="Carninci P."/>
            <person name="Kawai J."/>
            <person name="Hayashizaki Y."/>
            <person name="Shinozaki K."/>
        </authorList>
    </citation>
    <scope>NUCLEOTIDE SEQUENCE [LARGE SCALE MRNA]</scope>
    <source>
        <strain>cv. Columbia</strain>
    </source>
</reference>
<reference key="4">
    <citation type="submission" date="2006-05" db="EMBL/GenBank/DDBJ databases">
        <title>Arabidopsis ORF clones.</title>
        <authorList>
            <person name="Shinn P."/>
            <person name="Chen H."/>
            <person name="Kim C.J."/>
            <person name="Quinitio C."/>
            <person name="Ecker J.R."/>
        </authorList>
    </citation>
    <scope>NUCLEOTIDE SEQUENCE [LARGE SCALE MRNA]</scope>
    <source>
        <strain>cv. Columbia</strain>
    </source>
</reference>
<reference key="5">
    <citation type="journal article" date="2008" name="BMC Genomics">
        <title>Genome-wide analysis of CCCH zinc finger family in Arabidopsis and rice.</title>
        <authorList>
            <person name="Wang D."/>
            <person name="Guo Y."/>
            <person name="Wu C."/>
            <person name="Yang G."/>
            <person name="Li Y."/>
            <person name="Zheng C."/>
        </authorList>
    </citation>
    <scope>NOMENCLATURE</scope>
</reference>
<protein>
    <recommendedName>
        <fullName>Zinc finger CCCH domain-containing protein 6</fullName>
        <shortName>AtC3H6</shortName>
    </recommendedName>
</protein>
<sequence>MRALHKRVSWPPDFKLCQVRLFISEDSPSQVGSESQDHLQAKSPLASHPSDDNLPPGFGGPFSANESQIKLSDIPLIKWKCSVQILLDREWKVVAGDESKEVEAQNERELRVLEAFYPGASSIPPNPSVPADVEDSHHDDQQTIVIPILPVEDDDIAMDSASDFPTQSGVDVGTEPSITDENTSTSSTLPAGPDIMAALSAISNSKEQGSMIDQDLLIKILSNPKLVENLVANRGSAGSVSSNTSSLYSSSTHEANGVVTTAPISSNGQFYAQPPITHIPPMAYTPHAPQDQPNYGAPPARDASYYKNLIQQHGGDRQETPPVQHLGYRYNLQPGGGPNPEMVNSSNNNQRPRDSKPKIMKACMYFNSARGCRHGANCMYQHDATPYQPRNLNNGNINTSDMQNAKRMRFDRD</sequence>
<accession>Q56XU4</accession>
<accession>Q9FXI4</accession>
<organism>
    <name type="scientific">Arabidopsis thaliana</name>
    <name type="common">Mouse-ear cress</name>
    <dbReference type="NCBI Taxonomy" id="3702"/>
    <lineage>
        <taxon>Eukaryota</taxon>
        <taxon>Viridiplantae</taxon>
        <taxon>Streptophyta</taxon>
        <taxon>Embryophyta</taxon>
        <taxon>Tracheophyta</taxon>
        <taxon>Spermatophyta</taxon>
        <taxon>Magnoliopsida</taxon>
        <taxon>eudicotyledons</taxon>
        <taxon>Gunneridae</taxon>
        <taxon>Pentapetalae</taxon>
        <taxon>rosids</taxon>
        <taxon>malvids</taxon>
        <taxon>Brassicales</taxon>
        <taxon>Brassicaceae</taxon>
        <taxon>Camelineae</taxon>
        <taxon>Arabidopsis</taxon>
    </lineage>
</organism>